<feature type="chain" id="PRO_1000006354" description="Glycine--tRNA ligase beta subunit">
    <location>
        <begin position="1"/>
        <end position="688"/>
    </location>
</feature>
<evidence type="ECO:0000255" key="1">
    <source>
        <dbReference type="HAMAP-Rule" id="MF_00255"/>
    </source>
</evidence>
<accession>Q48AS2</accession>
<name>SYGB_COLP3</name>
<reference key="1">
    <citation type="journal article" date="2005" name="Proc. Natl. Acad. Sci. U.S.A.">
        <title>The psychrophilic lifestyle as revealed by the genome sequence of Colwellia psychrerythraea 34H through genomic and proteomic analyses.</title>
        <authorList>
            <person name="Methe B.A."/>
            <person name="Nelson K.E."/>
            <person name="Deming J.W."/>
            <person name="Momen B."/>
            <person name="Melamud E."/>
            <person name="Zhang X."/>
            <person name="Moult J."/>
            <person name="Madupu R."/>
            <person name="Nelson W.C."/>
            <person name="Dodson R.J."/>
            <person name="Brinkac L.M."/>
            <person name="Daugherty S.C."/>
            <person name="Durkin A.S."/>
            <person name="DeBoy R.T."/>
            <person name="Kolonay J.F."/>
            <person name="Sullivan S.A."/>
            <person name="Zhou L."/>
            <person name="Davidsen T.M."/>
            <person name="Wu M."/>
            <person name="Huston A.L."/>
            <person name="Lewis M."/>
            <person name="Weaver B."/>
            <person name="Weidman J.F."/>
            <person name="Khouri H."/>
            <person name="Utterback T.R."/>
            <person name="Feldblyum T.V."/>
            <person name="Fraser C.M."/>
        </authorList>
    </citation>
    <scope>NUCLEOTIDE SEQUENCE [LARGE SCALE GENOMIC DNA]</scope>
    <source>
        <strain>34H / ATCC BAA-681</strain>
    </source>
</reference>
<dbReference type="EC" id="6.1.1.14" evidence="1"/>
<dbReference type="EMBL" id="CP000083">
    <property type="protein sequence ID" value="AAZ27379.1"/>
    <property type="molecule type" value="Genomic_DNA"/>
</dbReference>
<dbReference type="RefSeq" id="WP_011040896.1">
    <property type="nucleotide sequence ID" value="NC_003910.7"/>
</dbReference>
<dbReference type="SMR" id="Q48AS2"/>
<dbReference type="STRING" id="167879.CPS_0006"/>
<dbReference type="KEGG" id="cps:CPS_0006"/>
<dbReference type="eggNOG" id="COG0751">
    <property type="taxonomic scope" value="Bacteria"/>
</dbReference>
<dbReference type="HOGENOM" id="CLU_007220_2_2_6"/>
<dbReference type="Proteomes" id="UP000000547">
    <property type="component" value="Chromosome"/>
</dbReference>
<dbReference type="GO" id="GO:0005829">
    <property type="term" value="C:cytosol"/>
    <property type="evidence" value="ECO:0007669"/>
    <property type="project" value="TreeGrafter"/>
</dbReference>
<dbReference type="GO" id="GO:0004814">
    <property type="term" value="F:arginine-tRNA ligase activity"/>
    <property type="evidence" value="ECO:0007669"/>
    <property type="project" value="InterPro"/>
</dbReference>
<dbReference type="GO" id="GO:0005524">
    <property type="term" value="F:ATP binding"/>
    <property type="evidence" value="ECO:0007669"/>
    <property type="project" value="UniProtKB-UniRule"/>
</dbReference>
<dbReference type="GO" id="GO:0004820">
    <property type="term" value="F:glycine-tRNA ligase activity"/>
    <property type="evidence" value="ECO:0007669"/>
    <property type="project" value="UniProtKB-UniRule"/>
</dbReference>
<dbReference type="GO" id="GO:0006420">
    <property type="term" value="P:arginyl-tRNA aminoacylation"/>
    <property type="evidence" value="ECO:0007669"/>
    <property type="project" value="InterPro"/>
</dbReference>
<dbReference type="GO" id="GO:0006426">
    <property type="term" value="P:glycyl-tRNA aminoacylation"/>
    <property type="evidence" value="ECO:0007669"/>
    <property type="project" value="UniProtKB-UniRule"/>
</dbReference>
<dbReference type="HAMAP" id="MF_00255">
    <property type="entry name" value="Gly_tRNA_synth_beta"/>
    <property type="match status" value="1"/>
</dbReference>
<dbReference type="InterPro" id="IPR008909">
    <property type="entry name" value="DALR_anticod-bd"/>
</dbReference>
<dbReference type="InterPro" id="IPR015944">
    <property type="entry name" value="Gly-tRNA-synth_bsu"/>
</dbReference>
<dbReference type="InterPro" id="IPR006194">
    <property type="entry name" value="Gly-tRNA-synth_heterodimer"/>
</dbReference>
<dbReference type="NCBIfam" id="TIGR00211">
    <property type="entry name" value="glyS"/>
    <property type="match status" value="1"/>
</dbReference>
<dbReference type="PANTHER" id="PTHR30075:SF2">
    <property type="entry name" value="GLYCINE--TRNA LIGASE, CHLOROPLASTIC_MITOCHONDRIAL 2"/>
    <property type="match status" value="1"/>
</dbReference>
<dbReference type="PANTHER" id="PTHR30075">
    <property type="entry name" value="GLYCYL-TRNA SYNTHETASE"/>
    <property type="match status" value="1"/>
</dbReference>
<dbReference type="Pfam" id="PF05746">
    <property type="entry name" value="DALR_1"/>
    <property type="match status" value="1"/>
</dbReference>
<dbReference type="Pfam" id="PF02092">
    <property type="entry name" value="tRNA_synt_2f"/>
    <property type="match status" value="1"/>
</dbReference>
<dbReference type="PRINTS" id="PR01045">
    <property type="entry name" value="TRNASYNTHGB"/>
</dbReference>
<dbReference type="SUPFAM" id="SSF109604">
    <property type="entry name" value="HD-domain/PDEase-like"/>
    <property type="match status" value="1"/>
</dbReference>
<dbReference type="PROSITE" id="PS50861">
    <property type="entry name" value="AA_TRNA_LIGASE_II_GLYAB"/>
    <property type="match status" value="1"/>
</dbReference>
<protein>
    <recommendedName>
        <fullName evidence="1">Glycine--tRNA ligase beta subunit</fullName>
        <ecNumber evidence="1">6.1.1.14</ecNumber>
    </recommendedName>
    <alternativeName>
        <fullName evidence="1">Glycyl-tRNA synthetase beta subunit</fullName>
        <shortName evidence="1">GlyRS</shortName>
    </alternativeName>
</protein>
<comment type="catalytic activity">
    <reaction evidence="1">
        <text>tRNA(Gly) + glycine + ATP = glycyl-tRNA(Gly) + AMP + diphosphate</text>
        <dbReference type="Rhea" id="RHEA:16013"/>
        <dbReference type="Rhea" id="RHEA-COMP:9664"/>
        <dbReference type="Rhea" id="RHEA-COMP:9683"/>
        <dbReference type="ChEBI" id="CHEBI:30616"/>
        <dbReference type="ChEBI" id="CHEBI:33019"/>
        <dbReference type="ChEBI" id="CHEBI:57305"/>
        <dbReference type="ChEBI" id="CHEBI:78442"/>
        <dbReference type="ChEBI" id="CHEBI:78522"/>
        <dbReference type="ChEBI" id="CHEBI:456215"/>
        <dbReference type="EC" id="6.1.1.14"/>
    </reaction>
</comment>
<comment type="subunit">
    <text evidence="1">Tetramer of two alpha and two beta subunits.</text>
</comment>
<comment type="subcellular location">
    <subcellularLocation>
        <location evidence="1">Cytoplasm</location>
    </subcellularLocation>
</comment>
<comment type="similarity">
    <text evidence="1">Belongs to the class-II aminoacyl-tRNA synthetase family.</text>
</comment>
<gene>
    <name evidence="1" type="primary">glyS</name>
    <name type="ordered locus">CPS_0006</name>
</gene>
<proteinExistence type="inferred from homology"/>
<organism>
    <name type="scientific">Colwellia psychrerythraea (strain 34H / ATCC BAA-681)</name>
    <name type="common">Vibrio psychroerythus</name>
    <dbReference type="NCBI Taxonomy" id="167879"/>
    <lineage>
        <taxon>Bacteria</taxon>
        <taxon>Pseudomonadati</taxon>
        <taxon>Pseudomonadota</taxon>
        <taxon>Gammaproteobacteria</taxon>
        <taxon>Alteromonadales</taxon>
        <taxon>Colwelliaceae</taxon>
        <taxon>Colwellia</taxon>
    </lineage>
</organism>
<sequence length="688" mass="76524">MTTETLLIELGTEELPPKSLKTLATAFYDNIKGQLDSHNLSYSDIKWFATPRRFAVQVFDLVEKQDDKIVEKRGPAVNVAFDDAGNASKAAQGWARSNGIEVDQAERLVTGKGEWLLHRATVSGKAVVELIPDMVTTALNKLPIAKPMRWGAERTQFIRPVQTLTMLFGSDIIAGEALGVSSSNQVQGHRFHHEGLVTINHANDYQAELAKAYVEVDFNERQNKIVAQIKQVANDIDAVALIDEELLNEVTALVEWPVTLVGTFDEDFLNVPAEPLIYSMKDHQKYFPVTDKNGQLVNKFIFVTNIESKDPNTIIFGNEKVIRPRLADAEFFFKTDKKQSLESRLKSLESVLFQKQLGTLKAKSERIASLSQFIAEQLNENAQDAYRAGLLSKTDLMSDMVLEFPQVQGTMGKYYALHDGENENIAQALEDQYRPRFAGDSLPEANIGCAVAISDKIDSLVGIFGINQAPKGDKDPFALRRAAIGSIRIIIEKQLDLDLSTLINKSIELFGDKLVNENTATDVLEFIMGRFRAFYQEQGISVDVIQAVLAKKPSAPLDFEKRIKAVTFFGELPEAATLAAANKRVGNILAKFDGELYQSFNTDLATEQAERDLADIYRDISLKVAPLMADKNYQAALSELAQLKAPIDTFFDGVMVMSDDEAVKINRLTLLNQIRNSFFAIADISVLQ</sequence>
<keyword id="KW-0030">Aminoacyl-tRNA synthetase</keyword>
<keyword id="KW-0067">ATP-binding</keyword>
<keyword id="KW-0963">Cytoplasm</keyword>
<keyword id="KW-0436">Ligase</keyword>
<keyword id="KW-0547">Nucleotide-binding</keyword>
<keyword id="KW-0648">Protein biosynthesis</keyword>